<reference key="1">
    <citation type="submission" date="2009-02" db="EMBL/GenBank/DDBJ databases">
        <title>Vibrio splendidus str. LGP32 complete genome.</title>
        <authorList>
            <person name="Mazel D."/>
            <person name="Le Roux F."/>
        </authorList>
    </citation>
    <scope>NUCLEOTIDE SEQUENCE [LARGE SCALE GENOMIC DNA]</scope>
    <source>
        <strain>LGP32</strain>
    </source>
</reference>
<dbReference type="EMBL" id="FM954972">
    <property type="protein sequence ID" value="CAV18072.1"/>
    <property type="molecule type" value="Genomic_DNA"/>
</dbReference>
<dbReference type="SMR" id="B7VLX9"/>
<dbReference type="STRING" id="575788.VS_1020"/>
<dbReference type="KEGG" id="vsp:VS_1020"/>
<dbReference type="eggNOG" id="COG0333">
    <property type="taxonomic scope" value="Bacteria"/>
</dbReference>
<dbReference type="HOGENOM" id="CLU_129084_2_1_6"/>
<dbReference type="Proteomes" id="UP000009100">
    <property type="component" value="Chromosome 1"/>
</dbReference>
<dbReference type="GO" id="GO:0015934">
    <property type="term" value="C:large ribosomal subunit"/>
    <property type="evidence" value="ECO:0007669"/>
    <property type="project" value="InterPro"/>
</dbReference>
<dbReference type="GO" id="GO:0003735">
    <property type="term" value="F:structural constituent of ribosome"/>
    <property type="evidence" value="ECO:0007669"/>
    <property type="project" value="InterPro"/>
</dbReference>
<dbReference type="GO" id="GO:0006412">
    <property type="term" value="P:translation"/>
    <property type="evidence" value="ECO:0007669"/>
    <property type="project" value="UniProtKB-UniRule"/>
</dbReference>
<dbReference type="HAMAP" id="MF_00340">
    <property type="entry name" value="Ribosomal_bL32"/>
    <property type="match status" value="1"/>
</dbReference>
<dbReference type="InterPro" id="IPR002677">
    <property type="entry name" value="Ribosomal_bL32"/>
</dbReference>
<dbReference type="InterPro" id="IPR044957">
    <property type="entry name" value="Ribosomal_bL32_bact"/>
</dbReference>
<dbReference type="InterPro" id="IPR011332">
    <property type="entry name" value="Ribosomal_zn-bd"/>
</dbReference>
<dbReference type="NCBIfam" id="TIGR01031">
    <property type="entry name" value="rpmF_bact"/>
    <property type="match status" value="1"/>
</dbReference>
<dbReference type="PANTHER" id="PTHR35534">
    <property type="entry name" value="50S RIBOSOMAL PROTEIN L32"/>
    <property type="match status" value="1"/>
</dbReference>
<dbReference type="PANTHER" id="PTHR35534:SF1">
    <property type="entry name" value="LARGE RIBOSOMAL SUBUNIT PROTEIN BL32"/>
    <property type="match status" value="1"/>
</dbReference>
<dbReference type="Pfam" id="PF01783">
    <property type="entry name" value="Ribosomal_L32p"/>
    <property type="match status" value="1"/>
</dbReference>
<dbReference type="SUPFAM" id="SSF57829">
    <property type="entry name" value="Zn-binding ribosomal proteins"/>
    <property type="match status" value="1"/>
</dbReference>
<keyword id="KW-0687">Ribonucleoprotein</keyword>
<keyword id="KW-0689">Ribosomal protein</keyword>
<comment type="similarity">
    <text evidence="1">Belongs to the bacterial ribosomal protein bL32 family.</text>
</comment>
<name>RL32_VIBA3</name>
<sequence length="56" mass="6216">MAVQKSKKSRSMRGMRRSHDALTTAALSVDATSGETHLRHNVTAEGFYRGKKVINK</sequence>
<protein>
    <recommendedName>
        <fullName evidence="1">Large ribosomal subunit protein bL32</fullName>
    </recommendedName>
    <alternativeName>
        <fullName evidence="3">50S ribosomal protein L32</fullName>
    </alternativeName>
</protein>
<organism>
    <name type="scientific">Vibrio atlanticus (strain LGP32)</name>
    <name type="common">Vibrio splendidus (strain Mel32)</name>
    <dbReference type="NCBI Taxonomy" id="575788"/>
    <lineage>
        <taxon>Bacteria</taxon>
        <taxon>Pseudomonadati</taxon>
        <taxon>Pseudomonadota</taxon>
        <taxon>Gammaproteobacteria</taxon>
        <taxon>Vibrionales</taxon>
        <taxon>Vibrionaceae</taxon>
        <taxon>Vibrio</taxon>
    </lineage>
</organism>
<feature type="chain" id="PRO_1000133343" description="Large ribosomal subunit protein bL32">
    <location>
        <begin position="1"/>
        <end position="56"/>
    </location>
</feature>
<feature type="region of interest" description="Disordered" evidence="2">
    <location>
        <begin position="1"/>
        <end position="21"/>
    </location>
</feature>
<feature type="compositionally biased region" description="Basic residues" evidence="2">
    <location>
        <begin position="1"/>
        <end position="16"/>
    </location>
</feature>
<gene>
    <name evidence="1" type="primary">rpmF</name>
    <name type="ordered locus">VS_1020</name>
</gene>
<evidence type="ECO:0000255" key="1">
    <source>
        <dbReference type="HAMAP-Rule" id="MF_00340"/>
    </source>
</evidence>
<evidence type="ECO:0000256" key="2">
    <source>
        <dbReference type="SAM" id="MobiDB-lite"/>
    </source>
</evidence>
<evidence type="ECO:0000305" key="3"/>
<accession>B7VLX9</accession>
<proteinExistence type="inferred from homology"/>